<feature type="chain" id="PRO_1000187071" description="2-succinyl-5-enolpyruvyl-6-hydroxy-3-cyclohexene-1-carboxylate synthase">
    <location>
        <begin position="1"/>
        <end position="556"/>
    </location>
</feature>
<dbReference type="EC" id="2.2.1.9" evidence="1"/>
<dbReference type="EMBL" id="CU928164">
    <property type="protein sequence ID" value="CAR18538.1"/>
    <property type="molecule type" value="Genomic_DNA"/>
</dbReference>
<dbReference type="RefSeq" id="WP_012602413.1">
    <property type="nucleotide sequence ID" value="NC_011750.1"/>
</dbReference>
<dbReference type="RefSeq" id="YP_002408368.1">
    <property type="nucleotide sequence ID" value="NC_011750.1"/>
</dbReference>
<dbReference type="SMR" id="B7NNU4"/>
<dbReference type="STRING" id="585057.ECIAI39_2412"/>
<dbReference type="KEGG" id="ect:ECIAI39_2412"/>
<dbReference type="PATRIC" id="fig|585057.6.peg.2514"/>
<dbReference type="HOGENOM" id="CLU_006051_3_0_6"/>
<dbReference type="UniPathway" id="UPA00079"/>
<dbReference type="UniPathway" id="UPA01057">
    <property type="reaction ID" value="UER00164"/>
</dbReference>
<dbReference type="Proteomes" id="UP000000749">
    <property type="component" value="Chromosome"/>
</dbReference>
<dbReference type="GO" id="GO:0070204">
    <property type="term" value="F:2-succinyl-5-enolpyruvyl-6-hydroxy-3-cyclohexene-1-carboxylic-acid synthase activity"/>
    <property type="evidence" value="ECO:0007669"/>
    <property type="project" value="UniProtKB-UniRule"/>
</dbReference>
<dbReference type="GO" id="GO:0000287">
    <property type="term" value="F:magnesium ion binding"/>
    <property type="evidence" value="ECO:0007669"/>
    <property type="project" value="UniProtKB-UniRule"/>
</dbReference>
<dbReference type="GO" id="GO:0030145">
    <property type="term" value="F:manganese ion binding"/>
    <property type="evidence" value="ECO:0007669"/>
    <property type="project" value="UniProtKB-UniRule"/>
</dbReference>
<dbReference type="GO" id="GO:0030976">
    <property type="term" value="F:thiamine pyrophosphate binding"/>
    <property type="evidence" value="ECO:0007669"/>
    <property type="project" value="UniProtKB-UniRule"/>
</dbReference>
<dbReference type="GO" id="GO:0009234">
    <property type="term" value="P:menaquinone biosynthetic process"/>
    <property type="evidence" value="ECO:0007669"/>
    <property type="project" value="UniProtKB-UniRule"/>
</dbReference>
<dbReference type="CDD" id="cd07037">
    <property type="entry name" value="TPP_PYR_MenD"/>
    <property type="match status" value="1"/>
</dbReference>
<dbReference type="CDD" id="cd02009">
    <property type="entry name" value="TPP_SHCHC_synthase"/>
    <property type="match status" value="1"/>
</dbReference>
<dbReference type="FunFam" id="3.40.50.1220:FF:000010">
    <property type="entry name" value="2-succinyl-5-enolpyruvyl-6-hydroxy-3-cyclohexene-1-carboxylate synthase"/>
    <property type="match status" value="1"/>
</dbReference>
<dbReference type="FunFam" id="3.40.50.970:FF:000029">
    <property type="entry name" value="2-succinyl-5-enolpyruvyl-6-hydroxy-3-cyclohexene-1-carboxylate synthase"/>
    <property type="match status" value="1"/>
</dbReference>
<dbReference type="Gene3D" id="3.40.50.970">
    <property type="match status" value="2"/>
</dbReference>
<dbReference type="Gene3D" id="3.40.50.1220">
    <property type="entry name" value="TPP-binding domain"/>
    <property type="match status" value="1"/>
</dbReference>
<dbReference type="HAMAP" id="MF_01659">
    <property type="entry name" value="MenD"/>
    <property type="match status" value="1"/>
</dbReference>
<dbReference type="InterPro" id="IPR004433">
    <property type="entry name" value="MenaQ_synth_MenD"/>
</dbReference>
<dbReference type="InterPro" id="IPR032264">
    <property type="entry name" value="MenD_middle"/>
</dbReference>
<dbReference type="InterPro" id="IPR029061">
    <property type="entry name" value="THDP-binding"/>
</dbReference>
<dbReference type="InterPro" id="IPR012001">
    <property type="entry name" value="Thiamin_PyroP_enz_TPP-bd_dom"/>
</dbReference>
<dbReference type="InterPro" id="IPR011766">
    <property type="entry name" value="TPP_enzyme_TPP-bd"/>
</dbReference>
<dbReference type="NCBIfam" id="TIGR00173">
    <property type="entry name" value="menD"/>
    <property type="match status" value="1"/>
</dbReference>
<dbReference type="PANTHER" id="PTHR42916">
    <property type="entry name" value="2-SUCCINYL-5-ENOLPYRUVYL-6-HYDROXY-3-CYCLOHEXENE-1-CARBOXYLATE SYNTHASE"/>
    <property type="match status" value="1"/>
</dbReference>
<dbReference type="PANTHER" id="PTHR42916:SF1">
    <property type="entry name" value="PROTEIN PHYLLO, CHLOROPLASTIC"/>
    <property type="match status" value="1"/>
</dbReference>
<dbReference type="Pfam" id="PF02775">
    <property type="entry name" value="TPP_enzyme_C"/>
    <property type="match status" value="1"/>
</dbReference>
<dbReference type="Pfam" id="PF16582">
    <property type="entry name" value="TPP_enzyme_M_2"/>
    <property type="match status" value="1"/>
</dbReference>
<dbReference type="Pfam" id="PF02776">
    <property type="entry name" value="TPP_enzyme_N"/>
    <property type="match status" value="1"/>
</dbReference>
<dbReference type="PIRSF" id="PIRSF004983">
    <property type="entry name" value="MenD"/>
    <property type="match status" value="1"/>
</dbReference>
<dbReference type="SUPFAM" id="SSF52518">
    <property type="entry name" value="Thiamin diphosphate-binding fold (THDP-binding)"/>
    <property type="match status" value="2"/>
</dbReference>
<keyword id="KW-0460">Magnesium</keyword>
<keyword id="KW-0464">Manganese</keyword>
<keyword id="KW-0474">Menaquinone biosynthesis</keyword>
<keyword id="KW-0479">Metal-binding</keyword>
<keyword id="KW-0786">Thiamine pyrophosphate</keyword>
<keyword id="KW-0808">Transferase</keyword>
<name>MEND_ECO7I</name>
<evidence type="ECO:0000255" key="1">
    <source>
        <dbReference type="HAMAP-Rule" id="MF_01659"/>
    </source>
</evidence>
<sequence length="556" mass="61402">MSVSAFNRRWAAVILEALTRHGVRHICIAPGSRSTPLTLAAAENSAFIHHTHFDERGLGHLALGLAKVSKQPVAVIVTSGTAVANLYPALIEAGLTGEKLILLTADRPPELIDCGANQAIRQPGMFASHPTHSISLPRPTQDIPARWLVSTIDHALGTLHAGGVHINCPFAEPLYGEMDDTGLSWQQRLGDWWQDDKPWLREAPRLESEKQRDWFFWRQKRGVVVAGRMSAEEGKKVALWAQTLGWPLIGDVLSQTGQPLPCADLWLGNAKATSELQQTQIVVQLGSSLTGKRLLQWQASCEPEEYWIVDDIEGRLDPAHHRGRRLIANIADWLELHPAEKRQPWCVEIPRLAEQAMQAVIARRDAFGEAQLAHRISDYLPEQGQLFVGNSLVVRLIDALSQLPAGYPVYSNRGASGIDGLLSTAAGVQRASGKPTLAIVGDLSALYDLNALALLRQVSAPLVLIVVNNNGGQIFSLLPTPKNERERFYLMPQNVHFEHAAAMFELKYHRPQNWQELETALVDAWRTPTTTVIEMVVNDTDGAQTLQQLLAQVSHL</sequence>
<organism>
    <name type="scientific">Escherichia coli O7:K1 (strain IAI39 / ExPEC)</name>
    <dbReference type="NCBI Taxonomy" id="585057"/>
    <lineage>
        <taxon>Bacteria</taxon>
        <taxon>Pseudomonadati</taxon>
        <taxon>Pseudomonadota</taxon>
        <taxon>Gammaproteobacteria</taxon>
        <taxon>Enterobacterales</taxon>
        <taxon>Enterobacteriaceae</taxon>
        <taxon>Escherichia</taxon>
    </lineage>
</organism>
<protein>
    <recommendedName>
        <fullName evidence="1">2-succinyl-5-enolpyruvyl-6-hydroxy-3-cyclohexene-1-carboxylate synthase</fullName>
        <shortName evidence="1">SEPHCHC synthase</shortName>
        <ecNumber evidence="1">2.2.1.9</ecNumber>
    </recommendedName>
    <alternativeName>
        <fullName evidence="1">Menaquinone biosynthesis protein MenD</fullName>
    </alternativeName>
</protein>
<proteinExistence type="inferred from homology"/>
<gene>
    <name evidence="1" type="primary">menD</name>
    <name type="ordered locus">ECIAI39_2412</name>
</gene>
<comment type="function">
    <text evidence="1">Catalyzes the thiamine diphosphate-dependent decarboxylation of 2-oxoglutarate and the subsequent addition of the resulting succinic semialdehyde-thiamine pyrophosphate anion to isochorismate to yield 2-succinyl-5-enolpyruvyl-6-hydroxy-3-cyclohexene-1-carboxylate (SEPHCHC).</text>
</comment>
<comment type="catalytic activity">
    <reaction evidence="1">
        <text>isochorismate + 2-oxoglutarate + H(+) = 5-enolpyruvoyl-6-hydroxy-2-succinyl-cyclohex-3-ene-1-carboxylate + CO2</text>
        <dbReference type="Rhea" id="RHEA:25593"/>
        <dbReference type="ChEBI" id="CHEBI:15378"/>
        <dbReference type="ChEBI" id="CHEBI:16526"/>
        <dbReference type="ChEBI" id="CHEBI:16810"/>
        <dbReference type="ChEBI" id="CHEBI:29780"/>
        <dbReference type="ChEBI" id="CHEBI:58818"/>
        <dbReference type="EC" id="2.2.1.9"/>
    </reaction>
</comment>
<comment type="cofactor">
    <cofactor evidence="1">
        <name>Mg(2+)</name>
        <dbReference type="ChEBI" id="CHEBI:18420"/>
    </cofactor>
    <cofactor evidence="1">
        <name>Mn(2+)</name>
        <dbReference type="ChEBI" id="CHEBI:29035"/>
    </cofactor>
</comment>
<comment type="cofactor">
    <cofactor evidence="1">
        <name>thiamine diphosphate</name>
        <dbReference type="ChEBI" id="CHEBI:58937"/>
    </cofactor>
    <text evidence="1">Binds 1 thiamine pyrophosphate per subunit.</text>
</comment>
<comment type="pathway">
    <text evidence="1">Quinol/quinone metabolism; 1,4-dihydroxy-2-naphthoate biosynthesis; 1,4-dihydroxy-2-naphthoate from chorismate: step 2/7.</text>
</comment>
<comment type="pathway">
    <text evidence="1">Quinol/quinone metabolism; menaquinone biosynthesis.</text>
</comment>
<comment type="subunit">
    <text evidence="1">Homodimer.</text>
</comment>
<comment type="similarity">
    <text evidence="1">Belongs to the TPP enzyme family. MenD subfamily.</text>
</comment>
<accession>B7NNU4</accession>
<reference key="1">
    <citation type="journal article" date="2009" name="PLoS Genet.">
        <title>Organised genome dynamics in the Escherichia coli species results in highly diverse adaptive paths.</title>
        <authorList>
            <person name="Touchon M."/>
            <person name="Hoede C."/>
            <person name="Tenaillon O."/>
            <person name="Barbe V."/>
            <person name="Baeriswyl S."/>
            <person name="Bidet P."/>
            <person name="Bingen E."/>
            <person name="Bonacorsi S."/>
            <person name="Bouchier C."/>
            <person name="Bouvet O."/>
            <person name="Calteau A."/>
            <person name="Chiapello H."/>
            <person name="Clermont O."/>
            <person name="Cruveiller S."/>
            <person name="Danchin A."/>
            <person name="Diard M."/>
            <person name="Dossat C."/>
            <person name="Karoui M.E."/>
            <person name="Frapy E."/>
            <person name="Garry L."/>
            <person name="Ghigo J.M."/>
            <person name="Gilles A.M."/>
            <person name="Johnson J."/>
            <person name="Le Bouguenec C."/>
            <person name="Lescat M."/>
            <person name="Mangenot S."/>
            <person name="Martinez-Jehanne V."/>
            <person name="Matic I."/>
            <person name="Nassif X."/>
            <person name="Oztas S."/>
            <person name="Petit M.A."/>
            <person name="Pichon C."/>
            <person name="Rouy Z."/>
            <person name="Ruf C.S."/>
            <person name="Schneider D."/>
            <person name="Tourret J."/>
            <person name="Vacherie B."/>
            <person name="Vallenet D."/>
            <person name="Medigue C."/>
            <person name="Rocha E.P.C."/>
            <person name="Denamur E."/>
        </authorList>
    </citation>
    <scope>NUCLEOTIDE SEQUENCE [LARGE SCALE GENOMIC DNA]</scope>
    <source>
        <strain>IAI39 / ExPEC</strain>
    </source>
</reference>